<protein>
    <recommendedName>
        <fullName evidence="1 3">Ribulose bisphosphate carboxylase small subunit</fullName>
        <shortName evidence="1">RuBisCO small subunit</shortName>
    </recommendedName>
</protein>
<reference evidence="5" key="1">
    <citation type="journal article" date="2013" name="Biosci. Biotechnol. Biochem.">
        <title>Growth-phase dependent variation in photosynthetic activity and cellular protein expression profile in the harmful raphidophyte Chattonella antiqua.</title>
        <authorList>
            <person name="Qiu X."/>
            <person name="Shimasaki Y."/>
            <person name="Tsuyama M."/>
            <person name="Yamada T."/>
            <person name="Kuwahara R."/>
            <person name="Kawaguchi M."/>
            <person name="Honda M."/>
            <person name="Gunjikake H."/>
            <person name="Tasmin R."/>
            <person name="Shimizu M."/>
            <person name="Sato Y."/>
            <person name="Kato-Unoki Y."/>
            <person name="Nakashima T."/>
            <person name="Matsubara T."/>
            <person name="Yamasaki Y."/>
            <person name="Ichinose H."/>
            <person name="Wariishi H."/>
            <person name="Honjo T."/>
            <person name="Oshima Y."/>
        </authorList>
    </citation>
    <scope>PROTEIN SEQUENCE</scope>
    <source>
        <strain evidence="3">NIES-1</strain>
    </source>
</reference>
<reference evidence="5" key="2">
    <citation type="journal article" date="2020" name="J. Exp. Mar. Biol. Ecol.">
        <title>Diurnal variations in expression of photosynthesis-related proteins in the harmful Raphidophyceae Chattonella marina var. antiqua.</title>
        <authorList>
            <person name="Qiu X."/>
            <person name="Mukai K."/>
            <person name="Shimasaki Y."/>
            <person name="Wu M."/>
            <person name="Chen C."/>
            <person name="Lu Y."/>
            <person name="Ichinose H."/>
            <person name="Nakashima T."/>
            <person name="Kato-Unoki Y."/>
            <person name="Oshima Y."/>
        </authorList>
    </citation>
    <scope>PROTEIN SEQUENCE</scope>
    <scope>INDUCTION</scope>
    <source>
        <strain evidence="4">NIES-1</strain>
    </source>
</reference>
<keyword id="KW-0113">Calvin cycle</keyword>
<keyword id="KW-0120">Carbon dioxide fixation</keyword>
<keyword id="KW-0150">Chloroplast</keyword>
<keyword id="KW-0903">Direct protein sequencing</keyword>
<keyword id="KW-0601">Photorespiration</keyword>
<keyword id="KW-0602">Photosynthesis</keyword>
<keyword id="KW-0934">Plastid</keyword>
<proteinExistence type="evidence at protein level"/>
<organism>
    <name type="scientific">Chattonella marina var. antiqua</name>
    <name type="common">Red tide flagellate</name>
    <name type="synonym">Chattonella antiqua</name>
    <dbReference type="NCBI Taxonomy" id="859642"/>
    <lineage>
        <taxon>Eukaryota</taxon>
        <taxon>Sar</taxon>
        <taxon>Stramenopiles</taxon>
        <taxon>Ochrophyta</taxon>
        <taxon>Raphidophyceae</taxon>
        <taxon>Chattonellales</taxon>
        <taxon>Chattonellaceae</taxon>
        <taxon>Chattonella</taxon>
    </lineage>
</organism>
<name>RBS_CHAMQ</name>
<accession>C0HLR0</accession>
<feature type="chain" id="PRO_0000450209" description="Ribulose bisphosphate carboxylase small subunit">
    <location>
        <begin position="1"/>
        <end position="20" status="greater than"/>
    </location>
</feature>
<feature type="non-terminal residue" evidence="3">
    <location>
        <position position="20"/>
    </location>
</feature>
<gene>
    <name evidence="1" type="primary">rbcS</name>
</gene>
<comment type="function">
    <text evidence="1">RuBisCO catalyzes two reactions: the carboxylation of D-ribulose 1,5-bisphosphate, the primary event in carbon dioxide fixation, as well as the oxidative fragmentation of the pentose substrate in the photorespiration process. Both reactions occur simultaneously and in competition at the same active site. Although the small subunit is not catalytic it is essential for maximal activity.</text>
</comment>
<comment type="subunit">
    <text evidence="1">Heterohexadecamer of 8 large and 8 small subunits.</text>
</comment>
<comment type="subcellular location">
    <subcellularLocation>
        <location evidence="1">Plastid</location>
        <location evidence="1">Chloroplast</location>
    </subcellularLocation>
</comment>
<comment type="induction">
    <text evidence="2">Expressed at a constant level during a 12 hours light:12 hours dark diurnal cycle (at protein level).</text>
</comment>
<comment type="miscellaneous">
    <text evidence="1">The basic functional RuBisCO is composed of a large chain homodimer in a 'head-to-tail' conformation. In form I RuBisCO this homodimer is arranged in a barrel-like tetramer with the small subunits forming a tetrameric 'cap' on each end of the 'barrel'.</text>
</comment>
<comment type="miscellaneous">
    <text evidence="5">In this alga, in contrast to plants, the small subunit is encoded in the chloroplast.</text>
</comment>
<comment type="similarity">
    <text evidence="1">Belongs to the RuBisCO small chain family.</text>
</comment>
<dbReference type="GO" id="GO:0009507">
    <property type="term" value="C:chloroplast"/>
    <property type="evidence" value="ECO:0007669"/>
    <property type="project" value="UniProtKB-SubCell"/>
</dbReference>
<dbReference type="GO" id="GO:0019253">
    <property type="term" value="P:reductive pentose-phosphate cycle"/>
    <property type="evidence" value="ECO:0007669"/>
    <property type="project" value="UniProtKB-KW"/>
</dbReference>
<dbReference type="Gene3D" id="3.30.190.10">
    <property type="entry name" value="Ribulose bisphosphate carboxylase, small subunit"/>
    <property type="match status" value="1"/>
</dbReference>
<dbReference type="InterPro" id="IPR036385">
    <property type="entry name" value="RuBisCO_ssu_sf"/>
</dbReference>
<dbReference type="SUPFAM" id="SSF55239">
    <property type="entry name" value="RuBisCO, small subunit"/>
    <property type="match status" value="1"/>
</dbReference>
<evidence type="ECO:0000255" key="1">
    <source>
        <dbReference type="HAMAP-Rule" id="MF_00859"/>
    </source>
</evidence>
<evidence type="ECO:0000269" key="2">
    <source ref="2"/>
</evidence>
<evidence type="ECO:0000303" key="3">
    <source>
    </source>
</evidence>
<evidence type="ECO:0000303" key="4">
    <source ref="2"/>
</evidence>
<evidence type="ECO:0000305" key="5"/>
<sequence length="20" mass="2254">MRLTQGAFSYLPDLTDAQII</sequence>